<keyword id="KW-1015">Disulfide bond</keyword>
<keyword id="KW-0472">Membrane</keyword>
<keyword id="KW-1267">Proteomics identification</keyword>
<keyword id="KW-1185">Reference proteome</keyword>
<keyword id="KW-0732">Signal</keyword>
<keyword id="KW-0812">Transmembrane</keyword>
<keyword id="KW-1133">Transmembrane helix</keyword>
<comment type="interaction">
    <interactant intactId="EBI-10278423">
        <id>Q8WZ59</id>
    </interactant>
    <interactant intactId="EBI-11343438">
        <id>Q3SXY8</id>
        <label>ARL13B</label>
    </interactant>
    <organismsDiffer>false</organismsDiffer>
    <experiments>3</experiments>
</comment>
<comment type="interaction">
    <interactant intactId="EBI-10278423">
        <id>Q8WZ59</id>
    </interactant>
    <interactant intactId="EBI-2836595">
        <id>Q07108</id>
        <label>CD69</label>
    </interactant>
    <organismsDiffer>false</organismsDiffer>
    <experiments>6</experiments>
</comment>
<comment type="interaction">
    <interactant intactId="EBI-10278423">
        <id>Q8WZ59</id>
    </interactant>
    <interactant intactId="EBI-18400628">
        <id>O00501</id>
        <label>CLDN5</label>
    </interactant>
    <organismsDiffer>false</organismsDiffer>
    <experiments>3</experiments>
</comment>
<comment type="interaction">
    <interactant intactId="EBI-10278423">
        <id>Q8WZ59</id>
    </interactant>
    <interactant intactId="EBI-11749983">
        <id>Q9UHP7-3</id>
        <label>CLEC2D</label>
    </interactant>
    <organismsDiffer>false</organismsDiffer>
    <experiments>3</experiments>
</comment>
<comment type="interaction">
    <interactant intactId="EBI-10278423">
        <id>Q8WZ59</id>
    </interactant>
    <interactant intactId="EBI-10196781">
        <id>P0C7H8</id>
        <label>KRTAP2-3</label>
    </interactant>
    <organismsDiffer>false</organismsDiffer>
    <experiments>3</experiments>
</comment>
<comment type="interaction">
    <interactant intactId="EBI-10278423">
        <id>Q8WZ59</id>
    </interactant>
    <interactant intactId="EBI-11993296">
        <id>Q6L8G4</id>
        <label>KRTAP5-11</label>
    </interactant>
    <organismsDiffer>false</organismsDiffer>
    <experiments>3</experiments>
</comment>
<comment type="interaction">
    <interactant intactId="EBI-10278423">
        <id>Q8WZ59</id>
    </interactant>
    <interactant intactId="EBI-1044640">
        <id>Q9BYQ4</id>
        <label>KRTAP9-2</label>
    </interactant>
    <organismsDiffer>false</organismsDiffer>
    <experiments>3</experiments>
</comment>
<comment type="interaction">
    <interactant intactId="EBI-10278423">
        <id>Q8WZ59</id>
    </interactant>
    <interactant intactId="EBI-10173166">
        <id>Q5T700</id>
        <label>LDLRAD1</label>
    </interactant>
    <organismsDiffer>false</organismsDiffer>
    <experiments>7</experiments>
</comment>
<comment type="interaction">
    <interactant intactId="EBI-10278423">
        <id>Q8WZ59</id>
    </interactant>
    <interactant intactId="EBI-2683507">
        <id>Q8N5G2</id>
        <label>MACO1</label>
    </interactant>
    <organismsDiffer>false</organismsDiffer>
    <experiments>3</experiments>
</comment>
<comment type="interaction">
    <interactant intactId="EBI-10278423">
        <id>Q8WZ59</id>
    </interactant>
    <interactant intactId="EBI-748229">
        <id>Q9H8S9</id>
        <label>MOB1A</label>
    </interactant>
    <organismsDiffer>false</organismsDiffer>
    <experiments>3</experiments>
</comment>
<comment type="interaction">
    <interactant intactId="EBI-10278423">
        <id>Q8WZ59</id>
    </interactant>
    <interactant intactId="EBI-12078338">
        <id>O43278-2</id>
        <label>SPINT1</label>
    </interactant>
    <organismsDiffer>false</organismsDiffer>
    <experiments>3</experiments>
</comment>
<comment type="interaction">
    <interactant intactId="EBI-10278423">
        <id>Q8WZ59</id>
    </interactant>
    <interactant intactId="EBI-19027521">
        <id>Q8N6K0</id>
        <label>TEX29</label>
    </interactant>
    <organismsDiffer>false</organismsDiffer>
    <experiments>3</experiments>
</comment>
<comment type="subcellular location">
    <subcellularLocation>
        <location evidence="1">Membrane</location>
        <topology evidence="1">Single-pass type I membrane protein</topology>
    </subcellularLocation>
</comment>
<evidence type="ECO:0000250" key="1"/>
<evidence type="ECO:0000255" key="2"/>
<evidence type="ECO:0000256" key="3">
    <source>
        <dbReference type="SAM" id="MobiDB-lite"/>
    </source>
</evidence>
<sequence>MLGCGIPALGLLLLLQGSADGNGIQGFFYPWSCEGDIWDRESCGGQAAIDSPNLCLRLRCCYRNGVCYHQRPDENVRRKHMWALVWTCSGLLLLSCSICLFWWAKRRDVLHMPGFLAGPCDMSKSVSLLSKHRGTKKTPSTGSVPVALSKESRDVEGGTEGEGTEEGEETEGEEEED</sequence>
<organism>
    <name type="scientific">Homo sapiens</name>
    <name type="common">Human</name>
    <dbReference type="NCBI Taxonomy" id="9606"/>
    <lineage>
        <taxon>Eukaryota</taxon>
        <taxon>Metazoa</taxon>
        <taxon>Chordata</taxon>
        <taxon>Craniata</taxon>
        <taxon>Vertebrata</taxon>
        <taxon>Euteleostomi</taxon>
        <taxon>Mammalia</taxon>
        <taxon>Eutheria</taxon>
        <taxon>Euarchontoglires</taxon>
        <taxon>Primates</taxon>
        <taxon>Haplorrhini</taxon>
        <taxon>Catarrhini</taxon>
        <taxon>Hominidae</taxon>
        <taxon>Homo</taxon>
    </lineage>
</organism>
<proteinExistence type="evidence at protein level"/>
<reference key="1">
    <citation type="submission" date="2001-11" db="EMBL/GenBank/DDBJ databases">
        <title>Identification of MDAC1, a novel gene located on human chromosome 19.</title>
        <authorList>
            <person name="Gong L."/>
            <person name="Wu K."/>
        </authorList>
    </citation>
    <scope>NUCLEOTIDE SEQUENCE [MRNA]</scope>
</reference>
<reference key="2">
    <citation type="journal article" date="2004" name="Nature">
        <title>The DNA sequence and biology of human chromosome 19.</title>
        <authorList>
            <person name="Grimwood J."/>
            <person name="Gordon L.A."/>
            <person name="Olsen A.S."/>
            <person name="Terry A."/>
            <person name="Schmutz J."/>
            <person name="Lamerdin J.E."/>
            <person name="Hellsten U."/>
            <person name="Goodstein D."/>
            <person name="Couronne O."/>
            <person name="Tran-Gyamfi M."/>
            <person name="Aerts A."/>
            <person name="Altherr M."/>
            <person name="Ashworth L."/>
            <person name="Bajorek E."/>
            <person name="Black S."/>
            <person name="Branscomb E."/>
            <person name="Caenepeel S."/>
            <person name="Carrano A.V."/>
            <person name="Caoile C."/>
            <person name="Chan Y.M."/>
            <person name="Christensen M."/>
            <person name="Cleland C.A."/>
            <person name="Copeland A."/>
            <person name="Dalin E."/>
            <person name="Dehal P."/>
            <person name="Denys M."/>
            <person name="Detter J.C."/>
            <person name="Escobar J."/>
            <person name="Flowers D."/>
            <person name="Fotopulos D."/>
            <person name="Garcia C."/>
            <person name="Georgescu A.M."/>
            <person name="Glavina T."/>
            <person name="Gomez M."/>
            <person name="Gonzales E."/>
            <person name="Groza M."/>
            <person name="Hammon N."/>
            <person name="Hawkins T."/>
            <person name="Haydu L."/>
            <person name="Ho I."/>
            <person name="Huang W."/>
            <person name="Israni S."/>
            <person name="Jett J."/>
            <person name="Kadner K."/>
            <person name="Kimball H."/>
            <person name="Kobayashi A."/>
            <person name="Larionov V."/>
            <person name="Leem S.-H."/>
            <person name="Lopez F."/>
            <person name="Lou Y."/>
            <person name="Lowry S."/>
            <person name="Malfatti S."/>
            <person name="Martinez D."/>
            <person name="McCready P.M."/>
            <person name="Medina C."/>
            <person name="Morgan J."/>
            <person name="Nelson K."/>
            <person name="Nolan M."/>
            <person name="Ovcharenko I."/>
            <person name="Pitluck S."/>
            <person name="Pollard M."/>
            <person name="Popkie A.P."/>
            <person name="Predki P."/>
            <person name="Quan G."/>
            <person name="Ramirez L."/>
            <person name="Rash S."/>
            <person name="Retterer J."/>
            <person name="Rodriguez A."/>
            <person name="Rogers S."/>
            <person name="Salamov A."/>
            <person name="Salazar A."/>
            <person name="She X."/>
            <person name="Smith D."/>
            <person name="Slezak T."/>
            <person name="Solovyev V."/>
            <person name="Thayer N."/>
            <person name="Tice H."/>
            <person name="Tsai M."/>
            <person name="Ustaszewska A."/>
            <person name="Vo N."/>
            <person name="Wagner M."/>
            <person name="Wheeler J."/>
            <person name="Wu K."/>
            <person name="Xie G."/>
            <person name="Yang J."/>
            <person name="Dubchak I."/>
            <person name="Furey T.S."/>
            <person name="DeJong P."/>
            <person name="Dickson M."/>
            <person name="Gordon D."/>
            <person name="Eichler E.E."/>
            <person name="Pennacchio L.A."/>
            <person name="Richardson P."/>
            <person name="Stubbs L."/>
            <person name="Rokhsar D.S."/>
            <person name="Myers R.M."/>
            <person name="Rubin E.M."/>
            <person name="Lucas S.M."/>
        </authorList>
    </citation>
    <scope>NUCLEOTIDE SEQUENCE [LARGE SCALE GENOMIC DNA]</scope>
</reference>
<reference key="3">
    <citation type="submission" date="2006-12" db="EMBL/GenBank/DDBJ databases">
        <authorList>
            <person name="Mural R.J."/>
            <person name="Istrail S."/>
            <person name="Sutton G.G."/>
            <person name="Florea L."/>
            <person name="Halpern A.L."/>
            <person name="Mobarry C.M."/>
            <person name="Lippert R."/>
            <person name="Walenz B."/>
            <person name="Shatkay H."/>
            <person name="Dew I."/>
            <person name="Miller J.R."/>
            <person name="Flanigan M.J."/>
            <person name="Edwards N.J."/>
            <person name="Bolanos R."/>
            <person name="Fasulo D."/>
            <person name="Halldorsson B.V."/>
            <person name="Hannenhalli S."/>
            <person name="Turner R."/>
            <person name="Yooseph S."/>
            <person name="Lu F."/>
            <person name="Nusskern D.R."/>
            <person name="Shue B.C."/>
            <person name="Zheng X.H."/>
            <person name="Zhong F."/>
            <person name="Delcher A.L."/>
            <person name="Huson D.H."/>
            <person name="Kravitz S.A."/>
            <person name="Mouchard L."/>
            <person name="Reinert K."/>
            <person name="Remington K.A."/>
            <person name="Clark A.G."/>
            <person name="Waterman M.S."/>
            <person name="Eichler E.E."/>
            <person name="Adams M.D."/>
            <person name="Hunkapiller M.W."/>
            <person name="Myers E.W."/>
            <person name="Venter J.C."/>
        </authorList>
    </citation>
    <scope>NUCLEOTIDE SEQUENCE [LARGE SCALE GENOMIC DNA]</scope>
</reference>
<reference key="4">
    <citation type="journal article" date="2004" name="Genome Res.">
        <title>The status, quality, and expansion of the NIH full-length cDNA project: the Mammalian Gene Collection (MGC).</title>
        <authorList>
            <consortium name="The MGC Project Team"/>
        </authorList>
    </citation>
    <scope>NUCLEOTIDE SEQUENCE [LARGE SCALE MRNA]</scope>
</reference>
<dbReference type="EMBL" id="AF442729">
    <property type="protein sequence ID" value="AAL35294.1"/>
    <property type="molecule type" value="mRNA"/>
</dbReference>
<dbReference type="EMBL" id="AC020922">
    <property type="status" value="NOT_ANNOTATED_CDS"/>
    <property type="molecule type" value="Genomic_DNA"/>
</dbReference>
<dbReference type="EMBL" id="CH471135">
    <property type="protein sequence ID" value="EAW72372.1"/>
    <property type="molecule type" value="Genomic_DNA"/>
</dbReference>
<dbReference type="EMBL" id="BC128189">
    <property type="protein sequence ID" value="AAI28190.1"/>
    <property type="molecule type" value="mRNA"/>
</dbReference>
<dbReference type="EMBL" id="BC128190">
    <property type="protein sequence ID" value="AAI28191.1"/>
    <property type="molecule type" value="mRNA"/>
</dbReference>
<dbReference type="CCDS" id="CCDS33113.1"/>
<dbReference type="RefSeq" id="NP_631911.1">
    <property type="nucleotide sequence ID" value="NM_139172.3"/>
</dbReference>
<dbReference type="BioGRID" id="127085">
    <property type="interactions" value="12"/>
</dbReference>
<dbReference type="FunCoup" id="Q8WZ59">
    <property type="interactions" value="94"/>
</dbReference>
<dbReference type="IntAct" id="Q8WZ59">
    <property type="interactions" value="12"/>
</dbReference>
<dbReference type="STRING" id="9606.ENSP00000291934"/>
<dbReference type="iPTMnet" id="Q8WZ59"/>
<dbReference type="PhosphoSitePlus" id="Q8WZ59"/>
<dbReference type="BioMuta" id="TMEM190"/>
<dbReference type="DMDM" id="74716581"/>
<dbReference type="MassIVE" id="Q8WZ59"/>
<dbReference type="PaxDb" id="9606-ENSP00000291934"/>
<dbReference type="PeptideAtlas" id="Q8WZ59"/>
<dbReference type="ProteomicsDB" id="75221"/>
<dbReference type="Antibodypedia" id="19561">
    <property type="antibodies" value="17 antibodies from 13 providers"/>
</dbReference>
<dbReference type="DNASU" id="147744"/>
<dbReference type="Ensembl" id="ENST00000291934.4">
    <property type="protein sequence ID" value="ENSP00000291934.3"/>
    <property type="gene ID" value="ENSG00000160472.5"/>
</dbReference>
<dbReference type="GeneID" id="147744"/>
<dbReference type="KEGG" id="hsa:147744"/>
<dbReference type="MANE-Select" id="ENST00000291934.4">
    <property type="protein sequence ID" value="ENSP00000291934.3"/>
    <property type="RefSeq nucleotide sequence ID" value="NM_139172.3"/>
    <property type="RefSeq protein sequence ID" value="NP_631911.1"/>
</dbReference>
<dbReference type="UCSC" id="uc002qkt.1">
    <property type="organism name" value="human"/>
</dbReference>
<dbReference type="AGR" id="HGNC:29632"/>
<dbReference type="CTD" id="147744"/>
<dbReference type="DisGeNET" id="147744"/>
<dbReference type="GeneCards" id="TMEM190"/>
<dbReference type="HGNC" id="HGNC:29632">
    <property type="gene designation" value="TMEM190"/>
</dbReference>
<dbReference type="HPA" id="ENSG00000160472">
    <property type="expression patterns" value="Group enriched (fallopian tube, testis)"/>
</dbReference>
<dbReference type="neXtProt" id="NX_Q8WZ59"/>
<dbReference type="OpenTargets" id="ENSG00000160472"/>
<dbReference type="PharmGKB" id="PA162406247"/>
<dbReference type="VEuPathDB" id="HostDB:ENSG00000160472"/>
<dbReference type="eggNOG" id="ENOG502T0Q7">
    <property type="taxonomic scope" value="Eukaryota"/>
</dbReference>
<dbReference type="GeneTree" id="ENSGT00390000006710"/>
<dbReference type="HOGENOM" id="CLU_130475_0_0_1"/>
<dbReference type="InParanoid" id="Q8WZ59"/>
<dbReference type="OMA" id="SSICLFW"/>
<dbReference type="OrthoDB" id="9529881at2759"/>
<dbReference type="PAN-GO" id="Q8WZ59">
    <property type="GO annotations" value="2 GO annotations based on evolutionary models"/>
</dbReference>
<dbReference type="PhylomeDB" id="Q8WZ59"/>
<dbReference type="TreeFam" id="TF337652"/>
<dbReference type="PathwayCommons" id="Q8WZ59"/>
<dbReference type="SignaLink" id="Q8WZ59"/>
<dbReference type="BioGRID-ORCS" id="147744">
    <property type="hits" value="17 hits in 1148 CRISPR screens"/>
</dbReference>
<dbReference type="GenomeRNAi" id="147744"/>
<dbReference type="Pharos" id="Q8WZ59">
    <property type="development level" value="Tdark"/>
</dbReference>
<dbReference type="PRO" id="PR:Q8WZ59"/>
<dbReference type="Proteomes" id="UP000005640">
    <property type="component" value="Chromosome 19"/>
</dbReference>
<dbReference type="RNAct" id="Q8WZ59">
    <property type="molecule type" value="protein"/>
</dbReference>
<dbReference type="Bgee" id="ENSG00000160472">
    <property type="expression patterns" value="Expressed in right uterine tube and 108 other cell types or tissues"/>
</dbReference>
<dbReference type="GO" id="GO:0002079">
    <property type="term" value="C:inner acrosomal membrane"/>
    <property type="evidence" value="ECO:0000318"/>
    <property type="project" value="GO_Central"/>
</dbReference>
<dbReference type="GO" id="GO:0005634">
    <property type="term" value="C:nucleus"/>
    <property type="evidence" value="ECO:0007005"/>
    <property type="project" value="UniProtKB"/>
</dbReference>
<dbReference type="GO" id="GO:0042802">
    <property type="term" value="F:identical protein binding"/>
    <property type="evidence" value="ECO:0007669"/>
    <property type="project" value="Ensembl"/>
</dbReference>
<dbReference type="GO" id="GO:0002244">
    <property type="term" value="P:hematopoietic progenitor cell differentiation"/>
    <property type="evidence" value="ECO:0000318"/>
    <property type="project" value="GO_Central"/>
</dbReference>
<dbReference type="InterPro" id="IPR044913">
    <property type="entry name" value="P_trefoil_dom_sf"/>
</dbReference>
<dbReference type="InterPro" id="IPR028248">
    <property type="entry name" value="TMEM190"/>
</dbReference>
<dbReference type="PANTHER" id="PTHR37868">
    <property type="entry name" value="TRANSMEMBRANE PROTEIN 190"/>
    <property type="match status" value="1"/>
</dbReference>
<dbReference type="PANTHER" id="PTHR37868:SF1">
    <property type="entry name" value="TRANSMEMBRANE PROTEIN 190"/>
    <property type="match status" value="1"/>
</dbReference>
<dbReference type="Pfam" id="PF15431">
    <property type="entry name" value="TMEM190"/>
    <property type="match status" value="1"/>
</dbReference>
<dbReference type="SUPFAM" id="SSF57492">
    <property type="entry name" value="Trefoil"/>
    <property type="match status" value="1"/>
</dbReference>
<protein>
    <recommendedName>
        <fullName>Transmembrane protein 190</fullName>
    </recommendedName>
</protein>
<accession>Q8WZ59</accession>
<accession>A6NJL5</accession>
<name>TM190_HUMAN</name>
<gene>
    <name type="primary">TMEM190</name>
    <name type="synonym">MDAC1</name>
</gene>
<feature type="signal peptide" evidence="2">
    <location>
        <begin position="1"/>
        <end position="21"/>
    </location>
</feature>
<feature type="chain" id="PRO_0000312282" description="Transmembrane protein 190">
    <location>
        <begin position="22"/>
        <end position="177"/>
    </location>
</feature>
<feature type="topological domain" description="Extracellular" evidence="2">
    <location>
        <begin position="22"/>
        <end position="81"/>
    </location>
</feature>
<feature type="transmembrane region" description="Helical" evidence="2">
    <location>
        <begin position="82"/>
        <end position="102"/>
    </location>
</feature>
<feature type="topological domain" description="Cytoplasmic" evidence="2">
    <location>
        <begin position="103"/>
        <end position="177"/>
    </location>
</feature>
<feature type="domain" description="P-type">
    <location>
        <begin position="31"/>
        <end position="71"/>
    </location>
</feature>
<feature type="region of interest" description="Disordered" evidence="3">
    <location>
        <begin position="131"/>
        <end position="177"/>
    </location>
</feature>
<feature type="compositionally biased region" description="Acidic residues" evidence="3">
    <location>
        <begin position="157"/>
        <end position="177"/>
    </location>
</feature>
<feature type="disulfide bond" evidence="1">
    <location>
        <begin position="33"/>
        <end position="61"/>
    </location>
</feature>
<feature type="disulfide bond" evidence="1">
    <location>
        <begin position="43"/>
        <end position="60"/>
    </location>
</feature>
<feature type="disulfide bond" evidence="1">
    <location>
        <begin position="55"/>
        <end position="67"/>
    </location>
</feature>